<name>RS3_ACIBS</name>
<gene>
    <name evidence="1" type="primary">rpsC</name>
    <name type="ordered locus">ABSDF0429</name>
</gene>
<feature type="chain" id="PRO_1000140915" description="Small ribosomal subunit protein uS3">
    <location>
        <begin position="1"/>
        <end position="250"/>
    </location>
</feature>
<feature type="domain" description="KH type-2" evidence="1">
    <location>
        <begin position="39"/>
        <end position="107"/>
    </location>
</feature>
<feature type="region of interest" description="Disordered" evidence="2">
    <location>
        <begin position="215"/>
        <end position="250"/>
    </location>
</feature>
<feature type="compositionally biased region" description="Basic and acidic residues" evidence="2">
    <location>
        <begin position="220"/>
        <end position="250"/>
    </location>
</feature>
<protein>
    <recommendedName>
        <fullName evidence="1">Small ribosomal subunit protein uS3</fullName>
    </recommendedName>
    <alternativeName>
        <fullName evidence="3">30S ribosomal protein S3</fullName>
    </alternativeName>
</protein>
<reference key="1">
    <citation type="journal article" date="2008" name="PLoS ONE">
        <title>Comparative analysis of Acinetobacters: three genomes for three lifestyles.</title>
        <authorList>
            <person name="Vallenet D."/>
            <person name="Nordmann P."/>
            <person name="Barbe V."/>
            <person name="Poirel L."/>
            <person name="Mangenot S."/>
            <person name="Bataille E."/>
            <person name="Dossat C."/>
            <person name="Gas S."/>
            <person name="Kreimeyer A."/>
            <person name="Lenoble P."/>
            <person name="Oztas S."/>
            <person name="Poulain J."/>
            <person name="Segurens B."/>
            <person name="Robert C."/>
            <person name="Abergel C."/>
            <person name="Claverie J.-M."/>
            <person name="Raoult D."/>
            <person name="Medigue C."/>
            <person name="Weissenbach J."/>
            <person name="Cruveiller S."/>
        </authorList>
    </citation>
    <scope>NUCLEOTIDE SEQUENCE [LARGE SCALE GENOMIC DNA]</scope>
    <source>
        <strain>SDF</strain>
    </source>
</reference>
<proteinExistence type="inferred from homology"/>
<organism>
    <name type="scientific">Acinetobacter baumannii (strain SDF)</name>
    <dbReference type="NCBI Taxonomy" id="509170"/>
    <lineage>
        <taxon>Bacteria</taxon>
        <taxon>Pseudomonadati</taxon>
        <taxon>Pseudomonadota</taxon>
        <taxon>Gammaproteobacteria</taxon>
        <taxon>Moraxellales</taxon>
        <taxon>Moraxellaceae</taxon>
        <taxon>Acinetobacter</taxon>
        <taxon>Acinetobacter calcoaceticus/baumannii complex</taxon>
    </lineage>
</organism>
<sequence>MGQKVHPVGIRLGVVKRHNANWYANPKQYAEYLLKDLQVREFLTKKLKNAMVSNILIERPSGAAKVTISTARPGIVIGKKGEDIEKLQRELTNIMGVPAQVSINEIDRPDLDARLVAEAIASQLEKRVMFRRAMKRAVQNTMRAGAKGIKVEVSGRLGGAEIARTEWYREGRVPLHTLRADIDYATMRAETTYGTIGVKVWIFRGEILGGMKQVMNPAPAEERPAKRGRGRGEGQERRGRRGDRAADKGE</sequence>
<dbReference type="EMBL" id="CU468230">
    <property type="protein sequence ID" value="CAO99820.1"/>
    <property type="molecule type" value="Genomic_DNA"/>
</dbReference>
<dbReference type="SMR" id="B0VQS4"/>
<dbReference type="KEGG" id="abm:ABSDF0429"/>
<dbReference type="HOGENOM" id="CLU_058591_0_2_6"/>
<dbReference type="Proteomes" id="UP000001741">
    <property type="component" value="Chromosome"/>
</dbReference>
<dbReference type="GO" id="GO:0022627">
    <property type="term" value="C:cytosolic small ribosomal subunit"/>
    <property type="evidence" value="ECO:0007669"/>
    <property type="project" value="TreeGrafter"/>
</dbReference>
<dbReference type="GO" id="GO:0003729">
    <property type="term" value="F:mRNA binding"/>
    <property type="evidence" value="ECO:0007669"/>
    <property type="project" value="UniProtKB-UniRule"/>
</dbReference>
<dbReference type="GO" id="GO:0019843">
    <property type="term" value="F:rRNA binding"/>
    <property type="evidence" value="ECO:0007669"/>
    <property type="project" value="UniProtKB-UniRule"/>
</dbReference>
<dbReference type="GO" id="GO:0003735">
    <property type="term" value="F:structural constituent of ribosome"/>
    <property type="evidence" value="ECO:0007669"/>
    <property type="project" value="InterPro"/>
</dbReference>
<dbReference type="GO" id="GO:0006412">
    <property type="term" value="P:translation"/>
    <property type="evidence" value="ECO:0007669"/>
    <property type="project" value="UniProtKB-UniRule"/>
</dbReference>
<dbReference type="CDD" id="cd02412">
    <property type="entry name" value="KH-II_30S_S3"/>
    <property type="match status" value="1"/>
</dbReference>
<dbReference type="FunFam" id="3.30.1140.32:FF:000001">
    <property type="entry name" value="30S ribosomal protein S3"/>
    <property type="match status" value="1"/>
</dbReference>
<dbReference type="FunFam" id="3.30.300.20:FF:000001">
    <property type="entry name" value="30S ribosomal protein S3"/>
    <property type="match status" value="1"/>
</dbReference>
<dbReference type="Gene3D" id="3.30.300.20">
    <property type="match status" value="1"/>
</dbReference>
<dbReference type="Gene3D" id="3.30.1140.32">
    <property type="entry name" value="Ribosomal protein S3, C-terminal domain"/>
    <property type="match status" value="1"/>
</dbReference>
<dbReference type="HAMAP" id="MF_01309_B">
    <property type="entry name" value="Ribosomal_uS3_B"/>
    <property type="match status" value="1"/>
</dbReference>
<dbReference type="InterPro" id="IPR004087">
    <property type="entry name" value="KH_dom"/>
</dbReference>
<dbReference type="InterPro" id="IPR015946">
    <property type="entry name" value="KH_dom-like_a/b"/>
</dbReference>
<dbReference type="InterPro" id="IPR004044">
    <property type="entry name" value="KH_dom_type_2"/>
</dbReference>
<dbReference type="InterPro" id="IPR009019">
    <property type="entry name" value="KH_sf_prok-type"/>
</dbReference>
<dbReference type="InterPro" id="IPR036419">
    <property type="entry name" value="Ribosomal_S3_C_sf"/>
</dbReference>
<dbReference type="InterPro" id="IPR005704">
    <property type="entry name" value="Ribosomal_uS3_bac-typ"/>
</dbReference>
<dbReference type="InterPro" id="IPR001351">
    <property type="entry name" value="Ribosomal_uS3_C"/>
</dbReference>
<dbReference type="InterPro" id="IPR018280">
    <property type="entry name" value="Ribosomal_uS3_CS"/>
</dbReference>
<dbReference type="NCBIfam" id="TIGR01009">
    <property type="entry name" value="rpsC_bact"/>
    <property type="match status" value="1"/>
</dbReference>
<dbReference type="PANTHER" id="PTHR11760">
    <property type="entry name" value="30S/40S RIBOSOMAL PROTEIN S3"/>
    <property type="match status" value="1"/>
</dbReference>
<dbReference type="PANTHER" id="PTHR11760:SF19">
    <property type="entry name" value="SMALL RIBOSOMAL SUBUNIT PROTEIN US3C"/>
    <property type="match status" value="1"/>
</dbReference>
<dbReference type="Pfam" id="PF07650">
    <property type="entry name" value="KH_2"/>
    <property type="match status" value="1"/>
</dbReference>
<dbReference type="Pfam" id="PF00189">
    <property type="entry name" value="Ribosomal_S3_C"/>
    <property type="match status" value="1"/>
</dbReference>
<dbReference type="SMART" id="SM00322">
    <property type="entry name" value="KH"/>
    <property type="match status" value="1"/>
</dbReference>
<dbReference type="SUPFAM" id="SSF54814">
    <property type="entry name" value="Prokaryotic type KH domain (KH-domain type II)"/>
    <property type="match status" value="1"/>
</dbReference>
<dbReference type="SUPFAM" id="SSF54821">
    <property type="entry name" value="Ribosomal protein S3 C-terminal domain"/>
    <property type="match status" value="1"/>
</dbReference>
<dbReference type="PROSITE" id="PS50823">
    <property type="entry name" value="KH_TYPE_2"/>
    <property type="match status" value="1"/>
</dbReference>
<dbReference type="PROSITE" id="PS00548">
    <property type="entry name" value="RIBOSOMAL_S3"/>
    <property type="match status" value="1"/>
</dbReference>
<evidence type="ECO:0000255" key="1">
    <source>
        <dbReference type="HAMAP-Rule" id="MF_01309"/>
    </source>
</evidence>
<evidence type="ECO:0000256" key="2">
    <source>
        <dbReference type="SAM" id="MobiDB-lite"/>
    </source>
</evidence>
<evidence type="ECO:0000305" key="3"/>
<accession>B0VQS4</accession>
<comment type="function">
    <text evidence="1">Binds the lower part of the 30S subunit head. Binds mRNA in the 70S ribosome, positioning it for translation.</text>
</comment>
<comment type="subunit">
    <text evidence="1">Part of the 30S ribosomal subunit. Forms a tight complex with proteins S10 and S14.</text>
</comment>
<comment type="similarity">
    <text evidence="1">Belongs to the universal ribosomal protein uS3 family.</text>
</comment>
<keyword id="KW-0687">Ribonucleoprotein</keyword>
<keyword id="KW-0689">Ribosomal protein</keyword>
<keyword id="KW-0694">RNA-binding</keyword>
<keyword id="KW-0699">rRNA-binding</keyword>